<reference key="1">
    <citation type="submission" date="2000-02" db="EMBL/GenBank/DDBJ databases">
        <title>Phylogenetic relationships of the aquatic angiosperm family Podostemaceae inferred from matK sequence data.</title>
        <authorList>
            <person name="Kita Y."/>
            <person name="Kato M."/>
        </authorList>
    </citation>
    <scope>NUCLEOTIDE SEQUENCE [GENOMIC DNA]</scope>
</reference>
<dbReference type="EMBL" id="AB038186">
    <property type="protein sequence ID" value="BAB83147.1"/>
    <property type="molecule type" value="Genomic_DNA"/>
</dbReference>
<dbReference type="GO" id="GO:0009507">
    <property type="term" value="C:chloroplast"/>
    <property type="evidence" value="ECO:0007669"/>
    <property type="project" value="UniProtKB-SubCell"/>
</dbReference>
<dbReference type="GO" id="GO:0003723">
    <property type="term" value="F:RNA binding"/>
    <property type="evidence" value="ECO:0007669"/>
    <property type="project" value="UniProtKB-KW"/>
</dbReference>
<dbReference type="GO" id="GO:0006397">
    <property type="term" value="P:mRNA processing"/>
    <property type="evidence" value="ECO:0007669"/>
    <property type="project" value="UniProtKB-KW"/>
</dbReference>
<dbReference type="GO" id="GO:0008380">
    <property type="term" value="P:RNA splicing"/>
    <property type="evidence" value="ECO:0007669"/>
    <property type="project" value="UniProtKB-UniRule"/>
</dbReference>
<dbReference type="GO" id="GO:0008033">
    <property type="term" value="P:tRNA processing"/>
    <property type="evidence" value="ECO:0007669"/>
    <property type="project" value="UniProtKB-KW"/>
</dbReference>
<dbReference type="HAMAP" id="MF_01390">
    <property type="entry name" value="MatK"/>
    <property type="match status" value="1"/>
</dbReference>
<dbReference type="InterPro" id="IPR024937">
    <property type="entry name" value="Domain_X"/>
</dbReference>
<dbReference type="InterPro" id="IPR002866">
    <property type="entry name" value="Maturase_MatK"/>
</dbReference>
<dbReference type="InterPro" id="IPR024942">
    <property type="entry name" value="Maturase_MatK_N"/>
</dbReference>
<dbReference type="PANTHER" id="PTHR34811">
    <property type="entry name" value="MATURASE K"/>
    <property type="match status" value="1"/>
</dbReference>
<dbReference type="PANTHER" id="PTHR34811:SF1">
    <property type="entry name" value="MATURASE K"/>
    <property type="match status" value="1"/>
</dbReference>
<dbReference type="Pfam" id="PF01348">
    <property type="entry name" value="Intron_maturas2"/>
    <property type="match status" value="1"/>
</dbReference>
<dbReference type="Pfam" id="PF01824">
    <property type="entry name" value="MatK_N"/>
    <property type="match status" value="1"/>
</dbReference>
<comment type="function">
    <text evidence="1">Usually encoded in the trnK tRNA gene intron. Probably assists in splicing its own and other chloroplast group II introns.</text>
</comment>
<comment type="subcellular location">
    <subcellularLocation>
        <location>Plastid</location>
        <location>Chloroplast</location>
    </subcellularLocation>
</comment>
<comment type="similarity">
    <text evidence="1">Belongs to the intron maturase 2 family. MatK subfamily.</text>
</comment>
<evidence type="ECO:0000255" key="1">
    <source>
        <dbReference type="HAMAP-Rule" id="MF_01390"/>
    </source>
</evidence>
<accession>Q8WKL8</accession>
<name>MATK_POPNI</name>
<protein>
    <recommendedName>
        <fullName evidence="1">Maturase K</fullName>
    </recommendedName>
    <alternativeName>
        <fullName evidence="1">Intron maturase</fullName>
    </alternativeName>
</protein>
<gene>
    <name evidence="1" type="primary">matK</name>
</gene>
<keyword id="KW-0150">Chloroplast</keyword>
<keyword id="KW-0507">mRNA processing</keyword>
<keyword id="KW-0934">Plastid</keyword>
<keyword id="KW-0694">RNA-binding</keyword>
<keyword id="KW-0819">tRNA processing</keyword>
<organism>
    <name type="scientific">Populus nigra</name>
    <name type="common">Lombardy poplar</name>
    <dbReference type="NCBI Taxonomy" id="3691"/>
    <lineage>
        <taxon>Eukaryota</taxon>
        <taxon>Viridiplantae</taxon>
        <taxon>Streptophyta</taxon>
        <taxon>Embryophyta</taxon>
        <taxon>Tracheophyta</taxon>
        <taxon>Spermatophyta</taxon>
        <taxon>Magnoliopsida</taxon>
        <taxon>eudicotyledons</taxon>
        <taxon>Gunneridae</taxon>
        <taxon>Pentapetalae</taxon>
        <taxon>rosids</taxon>
        <taxon>fabids</taxon>
        <taxon>Malpighiales</taxon>
        <taxon>Salicaceae</taxon>
        <taxon>Saliceae</taxon>
        <taxon>Populus</taxon>
    </lineage>
</organism>
<proteinExistence type="inferred from homology"/>
<geneLocation type="chloroplast"/>
<feature type="chain" id="PRO_0000143644" description="Maturase K">
    <location>
        <begin position="1"/>
        <end position="510"/>
    </location>
</feature>
<sequence length="510" mass="60991">MKIEKSQRNLEIDRSRKNDFLYPLIFREYIYTFAHDRDLNRSILLENVSYDNKYSLLIVKRLITRMYQQNHLIISANDSNQNTFFRYNKNLYFQMISEGFAVIVEIPFSLRLVSSLERSEIVKSHNLRSIHSIFPFLEGKFPHLNYLSEGLIPYPIHLEKLVQILRYWVKDPSSLHLLRLFLHEYWNLNSLIIPKKSISFFVKKNQRFFLFLYNSHVYEYESVFFFLCKQSFHFRLTFYQVFLERIDFYGKIEHFVEVFTKDWGDSLCLLKDPFIHYIRYQGKSIFVSKDTPLLMKKWKYYLVNLCQCHFDVCFQPQKIHINPFSLYKHSFALLGYLSSSSVRLNLSVVRSQMLENAFLMDNIMNKLDTTVSIIPLIGSLAKMKFCNAVGHPISKPTWADFSDSDIIDRFVRICRNLSHYYSGSSRKKSLYRIKYILRLSCVKTLARKHKSTVRIFLKRLGSELLEEFFTEEEQIIFLIFPRASSISQKLYRGRVWYLDIICINELSNHE</sequence>